<protein>
    <recommendedName>
        <fullName>Uncharacterized 13.0 kDa protein</fullName>
    </recommendedName>
</protein>
<sequence length="120" mass="13023">MAATTLTGDDGHFGAARRAGGCVAFTVRRYNRHVVGFSGIRARMLEKLRDAGRLLPADTKCALHTVPAACARCRRSLTLTPAVSCLPCGHSCLCTDCDQLFANVCFECKSAVQFKLRFIK</sequence>
<name>Y044_NPVOP</name>
<organism>
    <name type="scientific">Orgyia pseudotsugata multicapsid polyhedrosis virus</name>
    <name type="common">OpMNPV</name>
    <dbReference type="NCBI Taxonomy" id="262177"/>
    <lineage>
        <taxon>Viruses</taxon>
        <taxon>Viruses incertae sedis</taxon>
        <taxon>Naldaviricetes</taxon>
        <taxon>Lefavirales</taxon>
        <taxon>Baculoviridae</taxon>
        <taxon>Alphabaculovirus</taxon>
        <taxon>Alphabaculovirus orpseudotsugatae</taxon>
    </lineage>
</organism>
<evidence type="ECO:0000255" key="1">
    <source>
        <dbReference type="PROSITE-ProRule" id="PRU00175"/>
    </source>
</evidence>
<proteinExistence type="predicted"/>
<gene>
    <name type="ORF">ORF49</name>
</gene>
<keyword id="KW-0479">Metal-binding</keyword>
<keyword id="KW-1185">Reference proteome</keyword>
<keyword id="KW-0862">Zinc</keyword>
<keyword id="KW-0863">Zinc-finger</keyword>
<accession>O10304</accession>
<dbReference type="EMBL" id="U75930">
    <property type="protein sequence ID" value="AAC59048.1"/>
    <property type="molecule type" value="Genomic_DNA"/>
</dbReference>
<dbReference type="RefSeq" id="NP_046205.1">
    <property type="nucleotide sequence ID" value="NC_001875.2"/>
</dbReference>
<dbReference type="KEGG" id="vg:912102"/>
<dbReference type="OrthoDB" id="14290at10239"/>
<dbReference type="Proteomes" id="UP000009248">
    <property type="component" value="Genome"/>
</dbReference>
<dbReference type="GO" id="GO:0008270">
    <property type="term" value="F:zinc ion binding"/>
    <property type="evidence" value="ECO:0007669"/>
    <property type="project" value="UniProtKB-KW"/>
</dbReference>
<dbReference type="InterPro" id="IPR001841">
    <property type="entry name" value="Znf_RING"/>
</dbReference>
<dbReference type="PROSITE" id="PS50089">
    <property type="entry name" value="ZF_RING_2"/>
    <property type="match status" value="1"/>
</dbReference>
<reference key="1">
    <citation type="journal article" date="1997" name="Virology">
        <title>The sequence of the Orgyia pseudotsugata multinucleocapsid nuclear polyhedrosis virus genome.</title>
        <authorList>
            <person name="Ahrens C.H."/>
            <person name="Russell R.R."/>
            <person name="Funk C.J."/>
            <person name="Evans J."/>
            <person name="Harwood S."/>
            <person name="Rohrmann G.F."/>
        </authorList>
    </citation>
    <scope>NUCLEOTIDE SEQUENCE [LARGE SCALE GENOMIC DNA]</scope>
</reference>
<feature type="chain" id="PRO_0000056364" description="Uncharacterized 13.0 kDa protein">
    <location>
        <begin position="1"/>
        <end position="120"/>
    </location>
</feature>
<feature type="zinc finger region" description="RING-type" evidence="1">
    <location>
        <begin position="70"/>
        <end position="109"/>
    </location>
</feature>
<organismHost>
    <name type="scientific">Orgyia pseudotsugata</name>
    <name type="common">Douglas-fir tussock moth</name>
    <dbReference type="NCBI Taxonomy" id="33414"/>
</organismHost>